<protein>
    <recommendedName>
        <fullName>Myosin light chain 3, skeletal muscle isoform</fullName>
    </recommendedName>
    <alternativeName>
        <fullName>Alkali myosin light chain 3</fullName>
        <shortName>MLC-3</shortName>
    </alternativeName>
    <alternativeName>
        <fullName>Myosin light chain 3f</fullName>
    </alternativeName>
    <alternativeName>
        <fullName>Myosin light chain alkali 2</fullName>
        <shortName>Myosin light chain A2</shortName>
    </alternativeName>
    <alternativeName>
        <fullName>Skeletal-muscle myosin L-4 light chain</fullName>
    </alternativeName>
</protein>
<sequence length="150" mass="16710">MSFSPDEINDFKEAFLLFDRTGDAKITLSQVGDIVRALGQNPTNAEINKILGNPSKEEMNAKKITFEEFLPMLQAAANNKDQGTFEDFVEGLRVFDKEGNGTVMGAELRHVLATLGEKMTEEEVEELMKGQEDSNGCINYEAFVKHIMSV</sequence>
<reference key="1">
    <citation type="journal article" date="1982" name="Nucleic Acids Res.">
        <title>Molecular cloning and nucleotide sequences of the complementary DNAs to chicken skeletal muscle myosin two alkali light chain mRNAs.</title>
        <authorList>
            <person name="Nabeshima Y."/>
            <person name="Fujii-Kuriyama Y."/>
            <person name="Muramatsu M."/>
            <person name="Ogata K."/>
        </authorList>
    </citation>
    <scope>NUCLEOTIDE SEQUENCE [MRNA]</scope>
</reference>
<reference key="2">
    <citation type="journal article" date="1984" name="Nature">
        <title>Alternative transcription and two modes of splicing results in two myosin light chains from one gene.</title>
        <authorList>
            <person name="Nabeshima Y."/>
            <person name="Fujii-Kuriyama Y."/>
            <person name="Muramatsu M."/>
            <person name="Ogata K."/>
        </authorList>
    </citation>
    <scope>NUCLEOTIDE SEQUENCE [GENOMIC DNA]</scope>
    <source>
        <tissue>Skeletal muscle</tissue>
    </source>
</reference>
<reference key="3">
    <citation type="journal article" date="1981" name="Eur. J. Biochem.">
        <title>Amino-acid sequence of the L-4 light chain of chicken skeletal-muscle myosin.</title>
        <authorList>
            <person name="Maita T."/>
            <person name="Umegane T."/>
            <person name="Matsuda G."/>
        </authorList>
    </citation>
    <scope>PROTEIN SEQUENCE OF 2-150</scope>
    <scope>BLOCKAGE OF N-TERMINUS</scope>
    <source>
        <tissue>Skeletal muscle</tissue>
    </source>
</reference>
<proteinExistence type="evidence at protein level"/>
<feature type="initiator methionine" description="Removed" evidence="2">
    <location>
        <position position="1"/>
    </location>
</feature>
<feature type="chain" id="PRO_0000198705" description="Myosin light chain 3, skeletal muscle isoform">
    <location>
        <begin position="2"/>
        <end position="150"/>
    </location>
</feature>
<feature type="domain" description="EF-hand 1" evidence="1">
    <location>
        <begin position="6"/>
        <end position="41"/>
    </location>
</feature>
<feature type="domain" description="EF-hand 2" evidence="1">
    <location>
        <begin position="44"/>
        <end position="79"/>
    </location>
</feature>
<feature type="domain" description="EF-hand 3" evidence="1">
    <location>
        <begin position="83"/>
        <end position="118"/>
    </location>
</feature>
<feature type="domain" description="EF-hand 4" evidence="1">
    <location>
        <begin position="118"/>
        <end position="150"/>
    </location>
</feature>
<feature type="modified residue" description="Blocked amino end (Ser)">
    <location>
        <position position="2"/>
    </location>
</feature>
<feature type="sequence conflict" description="In Ref. 3; AA sequence." evidence="3" ref="3">
    <original>EIN</original>
    <variation>QID</variation>
    <location>
        <begin position="7"/>
        <end position="9"/>
    </location>
</feature>
<feature type="sequence conflict" description="In Ref. 2; AAA48956." evidence="3" ref="2">
    <original>Q</original>
    <variation>QM</variation>
    <location>
        <position position="74"/>
    </location>
</feature>
<feature type="sequence conflict" description="In Ref. 2; AAA48956." evidence="3" ref="2">
    <location>
        <position position="104"/>
    </location>
</feature>
<feature type="sequence conflict" description="In Ref. 2; AAA48961." evidence="3" ref="2">
    <original>M</original>
    <variation>I</variation>
    <location>
        <position position="128"/>
    </location>
</feature>
<keyword id="KW-0002">3D-structure</keyword>
<keyword id="KW-0025">Alternative splicing</keyword>
<keyword id="KW-0903">Direct protein sequencing</keyword>
<keyword id="KW-0505">Motor protein</keyword>
<keyword id="KW-0514">Muscle protein</keyword>
<keyword id="KW-0518">Myosin</keyword>
<keyword id="KW-1185">Reference proteome</keyword>
<keyword id="KW-0677">Repeat</keyword>
<dbReference type="EMBL" id="J00888">
    <property type="protein sequence ID" value="AAA48961.1"/>
    <property type="molecule type" value="mRNA"/>
</dbReference>
<dbReference type="EMBL" id="K02610">
    <property type="protein sequence ID" value="AAA48956.1"/>
    <property type="molecule type" value="Genomic_DNA"/>
</dbReference>
<dbReference type="EMBL" id="K02609">
    <property type="protein sequence ID" value="AAA48956.1"/>
    <property type="status" value="JOINED"/>
    <property type="molecule type" value="Genomic_DNA"/>
</dbReference>
<dbReference type="PIR" id="I50384">
    <property type="entry name" value="MOCHA2"/>
</dbReference>
<dbReference type="RefSeq" id="NP_001038097.2">
    <molecule id="P02605-1"/>
    <property type="nucleotide sequence ID" value="NM_001044632.2"/>
</dbReference>
<dbReference type="RefSeq" id="XP_040559306.1">
    <molecule id="P02605-1"/>
    <property type="nucleotide sequence ID" value="XM_040703372.2"/>
</dbReference>
<dbReference type="RefSeq" id="XP_046777173.1">
    <molecule id="P02605-1"/>
    <property type="nucleotide sequence ID" value="XM_046921217.1"/>
</dbReference>
<dbReference type="PDB" id="1MVW">
    <property type="method" value="EM"/>
    <property type="resolution" value="70.00 A"/>
    <property type="chains" value="C/F/I/L/O/R=10-150"/>
</dbReference>
<dbReference type="PDB" id="1O18">
    <property type="method" value="EM"/>
    <property type="resolution" value="70.00 A"/>
    <property type="chains" value="F/I/L/O/R=10-150"/>
</dbReference>
<dbReference type="PDB" id="1O19">
    <property type="method" value="EM"/>
    <property type="resolution" value="70.00 A"/>
    <property type="chains" value="C/F/I/L/O/U=10-150"/>
</dbReference>
<dbReference type="PDB" id="1O1A">
    <property type="method" value="EM"/>
    <property type="resolution" value="70.00 A"/>
    <property type="chains" value="C/F/I/L/O/R=10-150"/>
</dbReference>
<dbReference type="PDB" id="1O1B">
    <property type="method" value="EM"/>
    <property type="resolution" value="70.00 A"/>
    <property type="chains" value="C/F/I/L=10-150"/>
</dbReference>
<dbReference type="PDB" id="1O1C">
    <property type="method" value="EM"/>
    <property type="resolution" value="70.00 A"/>
    <property type="chains" value="C/F/I/L/R=10-150"/>
</dbReference>
<dbReference type="PDB" id="1O1D">
    <property type="method" value="EM"/>
    <property type="resolution" value="70.00 A"/>
    <property type="chains" value="C/F/I/L/O/R=10-150"/>
</dbReference>
<dbReference type="PDB" id="1O1E">
    <property type="method" value="EM"/>
    <property type="resolution" value="70.00 A"/>
    <property type="chains" value="C/F/I/L/O/R=10-150"/>
</dbReference>
<dbReference type="PDB" id="1O1F">
    <property type="method" value="EM"/>
    <property type="resolution" value="70.00 A"/>
    <property type="chains" value="C/F/I/L=10-150"/>
</dbReference>
<dbReference type="PDB" id="1O1G">
    <property type="method" value="EM"/>
    <property type="resolution" value="70.00 A"/>
    <property type="chains" value="C/F/I/L/O/R=10-150"/>
</dbReference>
<dbReference type="PDB" id="2W4A">
    <property type="method" value="EM"/>
    <property type="resolution" value="35.00 A"/>
    <property type="chains" value="C=6-150"/>
</dbReference>
<dbReference type="PDB" id="2W4G">
    <property type="method" value="EM"/>
    <property type="resolution" value="35.00 A"/>
    <property type="chains" value="C=6-150"/>
</dbReference>
<dbReference type="PDB" id="2W4H">
    <property type="method" value="EM"/>
    <property type="resolution" value="35.00 A"/>
    <property type="chains" value="C=6-150"/>
</dbReference>
<dbReference type="PDBsum" id="1MVW"/>
<dbReference type="PDBsum" id="1O18"/>
<dbReference type="PDBsum" id="1O19"/>
<dbReference type="PDBsum" id="1O1A"/>
<dbReference type="PDBsum" id="1O1B"/>
<dbReference type="PDBsum" id="1O1C"/>
<dbReference type="PDBsum" id="1O1D"/>
<dbReference type="PDBsum" id="1O1E"/>
<dbReference type="PDBsum" id="1O1F"/>
<dbReference type="PDBsum" id="1O1G"/>
<dbReference type="PDBsum" id="2W4A"/>
<dbReference type="PDBsum" id="2W4G"/>
<dbReference type="PDBsum" id="2W4H"/>
<dbReference type="SMR" id="P02605"/>
<dbReference type="FunCoup" id="P02605">
    <property type="interactions" value="526"/>
</dbReference>
<dbReference type="GeneID" id="396470"/>
<dbReference type="KEGG" id="gga:396470"/>
<dbReference type="CTD" id="4632"/>
<dbReference type="VEuPathDB" id="HostDB:geneid_396470"/>
<dbReference type="HOGENOM" id="CLU_061288_13_0_1"/>
<dbReference type="InParanoid" id="P02605"/>
<dbReference type="OrthoDB" id="5959761at2759"/>
<dbReference type="Reactome" id="R-GGA-390522">
    <property type="pathway name" value="Striated Muscle Contraction"/>
</dbReference>
<dbReference type="EvolutionaryTrace" id="P02605"/>
<dbReference type="Proteomes" id="UP000000539">
    <property type="component" value="Chromosome 7"/>
</dbReference>
<dbReference type="Bgee" id="ENSGALG00000002907">
    <property type="expression patterns" value="Expressed in muscle tissue and 6 other cell types or tissues"/>
</dbReference>
<dbReference type="GO" id="GO:0043292">
    <property type="term" value="C:contractile muscle fiber"/>
    <property type="evidence" value="ECO:0000318"/>
    <property type="project" value="GO_Central"/>
</dbReference>
<dbReference type="GO" id="GO:0016460">
    <property type="term" value="C:myosin II complex"/>
    <property type="evidence" value="ECO:0000318"/>
    <property type="project" value="GO_Central"/>
</dbReference>
<dbReference type="GO" id="GO:0005509">
    <property type="term" value="F:calcium ion binding"/>
    <property type="evidence" value="ECO:0007669"/>
    <property type="project" value="InterPro"/>
</dbReference>
<dbReference type="FunFam" id="1.10.238.10:FF:000019">
    <property type="entry name" value="Myosin light chain 1 skeletal"/>
    <property type="match status" value="1"/>
</dbReference>
<dbReference type="FunFam" id="1.10.238.10:FF:000056">
    <property type="entry name" value="Myosin light chain 1 skeletal"/>
    <property type="match status" value="1"/>
</dbReference>
<dbReference type="Gene3D" id="1.10.238.10">
    <property type="entry name" value="EF-hand"/>
    <property type="match status" value="2"/>
</dbReference>
<dbReference type="InterPro" id="IPR050230">
    <property type="entry name" value="CALM/Myosin/TropC-like"/>
</dbReference>
<dbReference type="InterPro" id="IPR011992">
    <property type="entry name" value="EF-hand-dom_pair"/>
</dbReference>
<dbReference type="InterPro" id="IPR002048">
    <property type="entry name" value="EF_hand_dom"/>
</dbReference>
<dbReference type="PANTHER" id="PTHR23048">
    <property type="entry name" value="MYOSIN LIGHT CHAIN 1, 3"/>
    <property type="match status" value="1"/>
</dbReference>
<dbReference type="PANTHER" id="PTHR23048:SF3">
    <property type="entry name" value="MYOSIN LIGHT CHAIN 1_3, SKELETAL MUSCLE ISOFORM"/>
    <property type="match status" value="1"/>
</dbReference>
<dbReference type="SMART" id="SM00054">
    <property type="entry name" value="EFh"/>
    <property type="match status" value="3"/>
</dbReference>
<dbReference type="SUPFAM" id="SSF47473">
    <property type="entry name" value="EF-hand"/>
    <property type="match status" value="1"/>
</dbReference>
<dbReference type="PROSITE" id="PS50222">
    <property type="entry name" value="EF_HAND_2"/>
    <property type="match status" value="4"/>
</dbReference>
<name>MLE3_CHICK</name>
<evidence type="ECO:0000255" key="1">
    <source>
        <dbReference type="PROSITE-ProRule" id="PRU00448"/>
    </source>
</evidence>
<evidence type="ECO:0000269" key="2">
    <source>
    </source>
</evidence>
<evidence type="ECO:0000305" key="3"/>
<organism>
    <name type="scientific">Gallus gallus</name>
    <name type="common">Chicken</name>
    <dbReference type="NCBI Taxonomy" id="9031"/>
    <lineage>
        <taxon>Eukaryota</taxon>
        <taxon>Metazoa</taxon>
        <taxon>Chordata</taxon>
        <taxon>Craniata</taxon>
        <taxon>Vertebrata</taxon>
        <taxon>Euteleostomi</taxon>
        <taxon>Archelosauria</taxon>
        <taxon>Archosauria</taxon>
        <taxon>Dinosauria</taxon>
        <taxon>Saurischia</taxon>
        <taxon>Theropoda</taxon>
        <taxon>Coelurosauria</taxon>
        <taxon>Aves</taxon>
        <taxon>Neognathae</taxon>
        <taxon>Galloanserae</taxon>
        <taxon>Galliformes</taxon>
        <taxon>Phasianidae</taxon>
        <taxon>Phasianinae</taxon>
        <taxon>Gallus</taxon>
    </lineage>
</organism>
<comment type="subunit">
    <text>Myosin is a hexamer of 2 heavy chains and 4 light chains.</text>
</comment>
<comment type="alternative products">
    <event type="alternative splicing"/>
    <isoform>
        <id>P02605-1</id>
        <name>MLC3</name>
        <sequence type="displayed"/>
    </isoform>
    <isoform>
        <id>P02604-1</id>
        <name>MLC1</name>
        <sequence type="external"/>
    </isoform>
</comment>
<comment type="PTM">
    <text>The N-terminus is blocked.</text>
</comment>
<accession>P02605</accession>
<accession>Q90896</accession>